<evidence type="ECO:0000255" key="1"/>
<evidence type="ECO:0000256" key="2">
    <source>
        <dbReference type="SAM" id="MobiDB-lite"/>
    </source>
</evidence>
<evidence type="ECO:0000269" key="3">
    <source>
    </source>
</evidence>
<evidence type="ECO:0000269" key="4">
    <source>
    </source>
</evidence>
<evidence type="ECO:0000269" key="5">
    <source>
    </source>
</evidence>
<evidence type="ECO:0000269" key="6">
    <source>
    </source>
</evidence>
<evidence type="ECO:0000269" key="7">
    <source>
    </source>
</evidence>
<evidence type="ECO:0000269" key="8">
    <source>
    </source>
</evidence>
<evidence type="ECO:0000269" key="9">
    <source>
    </source>
</evidence>
<evidence type="ECO:0000305" key="10"/>
<evidence type="ECO:0007744" key="11">
    <source>
    </source>
</evidence>
<accession>Q03388</accession>
<accession>D6VTA8</accession>
<sequence>MSDEGADKSLDTNTEFIIQTRSRRSNAGNKLQKLLEQELRDIESTKRQISSYKNGNDDEEDEIGLLFQEDEDDEDFEMMAKDDDDEGEEKEDETQSIRKEPSQASSEQAADDLMFSSSESEDSSNENDEDAEEKEIRRQELLSRKKRNKRLQKGPVVIKKQKPKPKSGEAIPRSHHTHEQLNAETLLLNTRRTSKRSSVMENTMKVYEKLSKAEKKRKIIQERIRKHKEQESQHMLTQEERLRIAKETEKLNILSLDKFKEQEVWKKENRLALQKRQKQKFQPNETILQFLSTAWLMTPAMELEDRKYWQEQLNKRDKKKKKYPRKPKKNLNLGKQDASDDKKRESEESIKNDGDVNSLGENSSSVHNQKRIEETSTNDTVEGESSPDAAVSRVNSDELKPTALPDVTLDAIANKQSTVDEAPNSQPQKNIITNEQKITNVGEPIQNLHNEEIKDEMVSALESRENTFENSSPAAQVVSQRDNSATPTPSNSTGTEDTILISPDTDIKGEPEPCLKTEGIENLSHNVPQETKSNTDVSFLKQVTFTDHPQVAIIDTEESPSKKDTANVDESSAENSLSTQTYEGPEQLTSRNFVTLYDFPNAPPNLKDFNTNLFGDRWSYTNGLSATQRPQDMKTVFHSILPSPPQSSVPSPTVDISLDLSALANFPSFGEYDKKIVHQINTEINKDLEIKIKTQPPTGVFLANGIRKKCLITNKECQYFDPRTGVPYSDVEAYKIIQRIQDPISKEEGRSDIKRDETTNEDSDDQVRFKWFGFKNGGIYLDLSQRPAKGVPEGF</sequence>
<keyword id="KW-0002">3D-structure</keyword>
<keyword id="KW-0156">Chromatin regulator</keyword>
<keyword id="KW-0175">Coiled coil</keyword>
<keyword id="KW-0539">Nucleus</keyword>
<keyword id="KW-0597">Phosphoprotein</keyword>
<keyword id="KW-1185">Reference proteome</keyword>
<gene>
    <name type="primary">VPS72</name>
    <name type="synonym">SWC2</name>
    <name type="ordered locus">YDR485C</name>
</gene>
<name>VPS72_YEAST</name>
<organism>
    <name type="scientific">Saccharomyces cerevisiae (strain ATCC 204508 / S288c)</name>
    <name type="common">Baker's yeast</name>
    <dbReference type="NCBI Taxonomy" id="559292"/>
    <lineage>
        <taxon>Eukaryota</taxon>
        <taxon>Fungi</taxon>
        <taxon>Dikarya</taxon>
        <taxon>Ascomycota</taxon>
        <taxon>Saccharomycotina</taxon>
        <taxon>Saccharomycetes</taxon>
        <taxon>Saccharomycetales</taxon>
        <taxon>Saccharomycetaceae</taxon>
        <taxon>Saccharomyces</taxon>
    </lineage>
</organism>
<proteinExistence type="evidence at protein level"/>
<comment type="function">
    <text evidence="3 6 7 8">Participates in the catalytic exchange of histone H2A for the H2A variant HTZ1, an euchromatin-specific factor, leading to chromatin remodeling and changes in transcription of targeted genes. Indirectly involved in vacuolar protein sorting.</text>
</comment>
<comment type="subunit">
    <text evidence="6 7 8 9">Belongs to the SWR1 complex at least composed of ACT1, ARP4, RVB1, RVB2, ARP6, YAF9, VPS71, VPS72, SWC3, SWC4, SWC5, SWR1 and HTZ1. Interacts with HTZ1.</text>
</comment>
<comment type="interaction">
    <interactant intactId="EBI-38035">
        <id>Q03388</id>
    </interactant>
    <interactant intactId="EBI-8080">
        <id>Q12692</id>
        <label>HTZ1</label>
    </interactant>
    <organismsDiffer>false</organismsDiffer>
    <experiments>10</experiments>
</comment>
<comment type="subcellular location">
    <subcellularLocation>
        <location evidence="4">Nucleus</location>
    </subcellularLocation>
</comment>
<comment type="miscellaneous">
    <text evidence="5">Present with 358 molecules/cell in log phase SD medium.</text>
</comment>
<comment type="similarity">
    <text evidence="10">Belongs to the VPS72/YL1 family.</text>
</comment>
<comment type="sequence caution" evidence="10">
    <conflict type="erroneous initiation">
        <sequence resource="EMBL-CDS" id="AAB64928"/>
    </conflict>
</comment>
<comment type="sequence caution" evidence="10">
    <conflict type="erroneous initiation">
        <sequence resource="EMBL-CDS" id="AAT93172"/>
    </conflict>
</comment>
<feature type="chain" id="PRO_0000065909" description="Vacuolar protein sorting-associated protein 72">
    <location>
        <begin position="1"/>
        <end position="795"/>
    </location>
</feature>
<feature type="region of interest" description="Interaction with HTZ1">
    <location>
        <begin position="1"/>
        <end position="281"/>
    </location>
</feature>
<feature type="region of interest" description="Disordered" evidence="2">
    <location>
        <begin position="40"/>
        <end position="179"/>
    </location>
</feature>
<feature type="region of interest" description="Disordered" evidence="2">
    <location>
        <begin position="314"/>
        <end position="406"/>
    </location>
</feature>
<feature type="region of interest" description="Disordered" evidence="2">
    <location>
        <begin position="462"/>
        <end position="510"/>
    </location>
</feature>
<feature type="region of interest" description="Disordered" evidence="2">
    <location>
        <begin position="554"/>
        <end position="585"/>
    </location>
</feature>
<feature type="coiled-coil region" evidence="1">
    <location>
        <begin position="28"/>
        <end position="63"/>
    </location>
</feature>
<feature type="coiled-coil region" evidence="1">
    <location>
        <begin position="121"/>
        <end position="150"/>
    </location>
</feature>
<feature type="coiled-coil region" evidence="1">
    <location>
        <begin position="204"/>
        <end position="281"/>
    </location>
</feature>
<feature type="compositionally biased region" description="Acidic residues" evidence="2">
    <location>
        <begin position="57"/>
        <end position="92"/>
    </location>
</feature>
<feature type="compositionally biased region" description="Acidic residues" evidence="2">
    <location>
        <begin position="119"/>
        <end position="133"/>
    </location>
</feature>
<feature type="compositionally biased region" description="Basic and acidic residues" evidence="2">
    <location>
        <begin position="134"/>
        <end position="143"/>
    </location>
</feature>
<feature type="compositionally biased region" description="Basic residues" evidence="2">
    <location>
        <begin position="316"/>
        <end position="329"/>
    </location>
</feature>
<feature type="compositionally biased region" description="Basic and acidic residues" evidence="2">
    <location>
        <begin position="337"/>
        <end position="354"/>
    </location>
</feature>
<feature type="compositionally biased region" description="Polar residues" evidence="2">
    <location>
        <begin position="468"/>
        <end position="496"/>
    </location>
</feature>
<feature type="compositionally biased region" description="Polar residues" evidence="2">
    <location>
        <begin position="568"/>
        <end position="585"/>
    </location>
</feature>
<feature type="modified residue" description="Phosphoserine" evidence="11">
    <location>
        <position position="425"/>
    </location>
</feature>
<dbReference type="EMBL" id="U33050">
    <property type="protein sequence ID" value="AAB64928.1"/>
    <property type="status" value="ALT_INIT"/>
    <property type="molecule type" value="Genomic_DNA"/>
</dbReference>
<dbReference type="EMBL" id="AY693153">
    <property type="protein sequence ID" value="AAT93172.1"/>
    <property type="status" value="ALT_INIT"/>
    <property type="molecule type" value="Genomic_DNA"/>
</dbReference>
<dbReference type="EMBL" id="BK006938">
    <property type="protein sequence ID" value="DAA12318.1"/>
    <property type="molecule type" value="Genomic_DNA"/>
</dbReference>
<dbReference type="PIR" id="S69652">
    <property type="entry name" value="S69652"/>
</dbReference>
<dbReference type="RefSeq" id="NP_010773.4">
    <property type="nucleotide sequence ID" value="NM_001180793.3"/>
</dbReference>
<dbReference type="PDB" id="8QKU">
    <property type="method" value="EM"/>
    <property type="resolution" value="3.80 A"/>
    <property type="chains" value="Z=195-623"/>
</dbReference>
<dbReference type="PDB" id="8QKV">
    <property type="method" value="EM"/>
    <property type="resolution" value="4.70 A"/>
    <property type="chains" value="Z=195-623"/>
</dbReference>
<dbReference type="PDB" id="8QYV">
    <property type="method" value="EM"/>
    <property type="resolution" value="3.50 A"/>
    <property type="chains" value="Z=1-795"/>
</dbReference>
<dbReference type="PDB" id="8QZ0">
    <property type="method" value="EM"/>
    <property type="resolution" value="3.80 A"/>
    <property type="chains" value="Z=1-795"/>
</dbReference>
<dbReference type="PDB" id="9B1D">
    <property type="method" value="EM"/>
    <property type="resolution" value="3.30 A"/>
    <property type="chains" value="B=1-795"/>
</dbReference>
<dbReference type="PDB" id="9B1E">
    <property type="method" value="EM"/>
    <property type="resolution" value="4.40 A"/>
    <property type="chains" value="B=1-795"/>
</dbReference>
<dbReference type="PDB" id="9FBW">
    <property type="method" value="EM"/>
    <property type="resolution" value="4.40 A"/>
    <property type="chains" value="Z=1-795"/>
</dbReference>
<dbReference type="PDBsum" id="8QKU"/>
<dbReference type="PDBsum" id="8QKV"/>
<dbReference type="PDBsum" id="8QYV"/>
<dbReference type="PDBsum" id="8QZ0"/>
<dbReference type="PDBsum" id="9B1D"/>
<dbReference type="PDBsum" id="9B1E"/>
<dbReference type="PDBsum" id="9FBW"/>
<dbReference type="EMDB" id="EMD-18471"/>
<dbReference type="EMDB" id="EMD-18472"/>
<dbReference type="EMDB" id="EMD-18764"/>
<dbReference type="EMDB" id="EMD-18769"/>
<dbReference type="EMDB" id="EMD-44074"/>
<dbReference type="EMDB" id="EMD-44075"/>
<dbReference type="EMDB" id="EMD-50297"/>
<dbReference type="SMR" id="Q03388"/>
<dbReference type="BioGRID" id="32537">
    <property type="interactions" value="565"/>
</dbReference>
<dbReference type="ComplexPortal" id="CPX-2122">
    <property type="entry name" value="Swr1 chromatin remodelling complex"/>
</dbReference>
<dbReference type="DIP" id="DIP-1008N"/>
<dbReference type="FunCoup" id="Q03388">
    <property type="interactions" value="135"/>
</dbReference>
<dbReference type="IntAct" id="Q03388">
    <property type="interactions" value="20"/>
</dbReference>
<dbReference type="MINT" id="Q03388"/>
<dbReference type="STRING" id="4932.YDR485C"/>
<dbReference type="GlyGen" id="Q03388">
    <property type="glycosylation" value="2 sites"/>
</dbReference>
<dbReference type="iPTMnet" id="Q03388"/>
<dbReference type="PaxDb" id="4932-YDR485C"/>
<dbReference type="PeptideAtlas" id="Q03388"/>
<dbReference type="EnsemblFungi" id="YDR485C_mRNA">
    <property type="protein sequence ID" value="YDR485C"/>
    <property type="gene ID" value="YDR485C"/>
</dbReference>
<dbReference type="GeneID" id="852096"/>
<dbReference type="KEGG" id="sce:YDR485C"/>
<dbReference type="AGR" id="SGD:S000002893"/>
<dbReference type="SGD" id="S000002893">
    <property type="gene designation" value="VPS72"/>
</dbReference>
<dbReference type="VEuPathDB" id="FungiDB:YDR485C"/>
<dbReference type="eggNOG" id="KOG2897">
    <property type="taxonomic scope" value="Eukaryota"/>
</dbReference>
<dbReference type="GeneTree" id="ENSGT00390000017503"/>
<dbReference type="HOGENOM" id="CLU_018782_0_0_1"/>
<dbReference type="InParanoid" id="Q03388"/>
<dbReference type="OMA" id="CQYFDPK"/>
<dbReference type="OrthoDB" id="49520at2759"/>
<dbReference type="BioCyc" id="YEAST:G3O-30010-MONOMER"/>
<dbReference type="BioGRID-ORCS" id="852096">
    <property type="hits" value="0 hits in 10 CRISPR screens"/>
</dbReference>
<dbReference type="PRO" id="PR:Q03388"/>
<dbReference type="Proteomes" id="UP000002311">
    <property type="component" value="Chromosome IV"/>
</dbReference>
<dbReference type="RNAct" id="Q03388">
    <property type="molecule type" value="protein"/>
</dbReference>
<dbReference type="GO" id="GO:0000785">
    <property type="term" value="C:chromatin"/>
    <property type="evidence" value="ECO:0000314"/>
    <property type="project" value="ComplexPortal"/>
</dbReference>
<dbReference type="GO" id="GO:0005737">
    <property type="term" value="C:cytoplasm"/>
    <property type="evidence" value="ECO:0007005"/>
    <property type="project" value="SGD"/>
</dbReference>
<dbReference type="GO" id="GO:0005634">
    <property type="term" value="C:nucleus"/>
    <property type="evidence" value="ECO:0007005"/>
    <property type="project" value="SGD"/>
</dbReference>
<dbReference type="GO" id="GO:0000812">
    <property type="term" value="C:Swr1 complex"/>
    <property type="evidence" value="ECO:0000314"/>
    <property type="project" value="SGD"/>
</dbReference>
<dbReference type="GO" id="GO:0042393">
    <property type="term" value="F:histone binding"/>
    <property type="evidence" value="ECO:0000353"/>
    <property type="project" value="SGD"/>
</dbReference>
<dbReference type="GO" id="GO:0006338">
    <property type="term" value="P:chromatin remodeling"/>
    <property type="evidence" value="ECO:0000314"/>
    <property type="project" value="SGD"/>
</dbReference>
<dbReference type="GO" id="GO:0006355">
    <property type="term" value="P:regulation of DNA-templated transcription"/>
    <property type="evidence" value="ECO:0000303"/>
    <property type="project" value="ComplexPortal"/>
</dbReference>
<dbReference type="InterPro" id="IPR013272">
    <property type="entry name" value="Vps72/YL1_C"/>
</dbReference>
<dbReference type="InterPro" id="IPR046757">
    <property type="entry name" value="YL1_N"/>
</dbReference>
<dbReference type="PANTHER" id="PTHR13275:SF4">
    <property type="entry name" value="VACUOLAR PROTEIN SORTING-ASSOCIATED PROTEIN 72 HOMOLOG"/>
    <property type="match status" value="1"/>
</dbReference>
<dbReference type="PANTHER" id="PTHR13275">
    <property type="entry name" value="YL-1 PROTEIN TRANSCRIPTION FACTOR-LIKE 1"/>
    <property type="match status" value="1"/>
</dbReference>
<dbReference type="Pfam" id="PF05764">
    <property type="entry name" value="YL1"/>
    <property type="match status" value="1"/>
</dbReference>
<dbReference type="Pfam" id="PF08265">
    <property type="entry name" value="YL1_C"/>
    <property type="match status" value="1"/>
</dbReference>
<dbReference type="SMART" id="SM00993">
    <property type="entry name" value="YL1_C"/>
    <property type="match status" value="1"/>
</dbReference>
<reference key="1">
    <citation type="journal article" date="1997" name="Nature">
        <title>The nucleotide sequence of Saccharomyces cerevisiae chromosome IV.</title>
        <authorList>
            <person name="Jacq C."/>
            <person name="Alt-Moerbe J."/>
            <person name="Andre B."/>
            <person name="Arnold W."/>
            <person name="Bahr A."/>
            <person name="Ballesta J.P.G."/>
            <person name="Bargues M."/>
            <person name="Baron L."/>
            <person name="Becker A."/>
            <person name="Biteau N."/>
            <person name="Bloecker H."/>
            <person name="Blugeon C."/>
            <person name="Boskovic J."/>
            <person name="Brandt P."/>
            <person name="Brueckner M."/>
            <person name="Buitrago M.J."/>
            <person name="Coster F."/>
            <person name="Delaveau T."/>
            <person name="del Rey F."/>
            <person name="Dujon B."/>
            <person name="Eide L.G."/>
            <person name="Garcia-Cantalejo J.M."/>
            <person name="Goffeau A."/>
            <person name="Gomez-Peris A."/>
            <person name="Granotier C."/>
            <person name="Hanemann V."/>
            <person name="Hankeln T."/>
            <person name="Hoheisel J.D."/>
            <person name="Jaeger W."/>
            <person name="Jimenez A."/>
            <person name="Jonniaux J.-L."/>
            <person name="Kraemer C."/>
            <person name="Kuester H."/>
            <person name="Laamanen P."/>
            <person name="Legros Y."/>
            <person name="Louis E.J."/>
            <person name="Moeller-Rieker S."/>
            <person name="Monnet A."/>
            <person name="Moro M."/>
            <person name="Mueller-Auer S."/>
            <person name="Nussbaumer B."/>
            <person name="Paricio N."/>
            <person name="Paulin L."/>
            <person name="Perea J."/>
            <person name="Perez-Alonso M."/>
            <person name="Perez-Ortin J.E."/>
            <person name="Pohl T.M."/>
            <person name="Prydz H."/>
            <person name="Purnelle B."/>
            <person name="Rasmussen S.W."/>
            <person name="Remacha M.A."/>
            <person name="Revuelta J.L."/>
            <person name="Rieger M."/>
            <person name="Salom D."/>
            <person name="Saluz H.P."/>
            <person name="Saiz J.E."/>
            <person name="Saren A.-M."/>
            <person name="Schaefer M."/>
            <person name="Scharfe M."/>
            <person name="Schmidt E.R."/>
            <person name="Schneider C."/>
            <person name="Scholler P."/>
            <person name="Schwarz S."/>
            <person name="Soler-Mira A."/>
            <person name="Urrestarazu L.A."/>
            <person name="Verhasselt P."/>
            <person name="Vissers S."/>
            <person name="Voet M."/>
            <person name="Volckaert G."/>
            <person name="Wagner G."/>
            <person name="Wambutt R."/>
            <person name="Wedler E."/>
            <person name="Wedler H."/>
            <person name="Woelfl S."/>
            <person name="Harris D.E."/>
            <person name="Bowman S."/>
            <person name="Brown D."/>
            <person name="Churcher C.M."/>
            <person name="Connor R."/>
            <person name="Dedman K."/>
            <person name="Gentles S."/>
            <person name="Hamlin N."/>
            <person name="Hunt S."/>
            <person name="Jones L."/>
            <person name="McDonald S."/>
            <person name="Murphy L.D."/>
            <person name="Niblett D."/>
            <person name="Odell C."/>
            <person name="Oliver K."/>
            <person name="Rajandream M.A."/>
            <person name="Richards C."/>
            <person name="Shore L."/>
            <person name="Walsh S.V."/>
            <person name="Barrell B.G."/>
            <person name="Dietrich F.S."/>
            <person name="Mulligan J.T."/>
            <person name="Allen E."/>
            <person name="Araujo R."/>
            <person name="Aviles E."/>
            <person name="Berno A."/>
            <person name="Carpenter J."/>
            <person name="Chen E."/>
            <person name="Cherry J.M."/>
            <person name="Chung E."/>
            <person name="Duncan M."/>
            <person name="Hunicke-Smith S."/>
            <person name="Hyman R.W."/>
            <person name="Komp C."/>
            <person name="Lashkari D."/>
            <person name="Lew H."/>
            <person name="Lin D."/>
            <person name="Mosedale D."/>
            <person name="Nakahara K."/>
            <person name="Namath A."/>
            <person name="Oefner P."/>
            <person name="Oh C."/>
            <person name="Petel F.X."/>
            <person name="Roberts D."/>
            <person name="Schramm S."/>
            <person name="Schroeder M."/>
            <person name="Shogren T."/>
            <person name="Shroff N."/>
            <person name="Winant A."/>
            <person name="Yelton M.A."/>
            <person name="Botstein D."/>
            <person name="Davis R.W."/>
            <person name="Johnston M."/>
            <person name="Andrews S."/>
            <person name="Brinkman R."/>
            <person name="Cooper J."/>
            <person name="Ding H."/>
            <person name="Du Z."/>
            <person name="Favello A."/>
            <person name="Fulton L."/>
            <person name="Gattung S."/>
            <person name="Greco T."/>
            <person name="Hallsworth K."/>
            <person name="Hawkins J."/>
            <person name="Hillier L.W."/>
            <person name="Jier M."/>
            <person name="Johnson D."/>
            <person name="Johnston L."/>
            <person name="Kirsten J."/>
            <person name="Kucaba T."/>
            <person name="Langston Y."/>
            <person name="Latreille P."/>
            <person name="Le T."/>
            <person name="Mardis E."/>
            <person name="Menezes S."/>
            <person name="Miller N."/>
            <person name="Nhan M."/>
            <person name="Pauley A."/>
            <person name="Peluso D."/>
            <person name="Rifkin L."/>
            <person name="Riles L."/>
            <person name="Taich A."/>
            <person name="Trevaskis E."/>
            <person name="Vignati D."/>
            <person name="Wilcox L."/>
            <person name="Wohldman P."/>
            <person name="Vaudin M."/>
            <person name="Wilson R."/>
            <person name="Waterston R."/>
            <person name="Albermann K."/>
            <person name="Hani J."/>
            <person name="Heumann K."/>
            <person name="Kleine K."/>
            <person name="Mewes H.-W."/>
            <person name="Zollner A."/>
            <person name="Zaccaria P."/>
        </authorList>
    </citation>
    <scope>NUCLEOTIDE SEQUENCE [LARGE SCALE GENOMIC DNA]</scope>
    <source>
        <strain>ATCC 204508 / S288c</strain>
    </source>
</reference>
<reference key="2">
    <citation type="journal article" date="2014" name="G3 (Bethesda)">
        <title>The reference genome sequence of Saccharomyces cerevisiae: Then and now.</title>
        <authorList>
            <person name="Engel S.R."/>
            <person name="Dietrich F.S."/>
            <person name="Fisk D.G."/>
            <person name="Binkley G."/>
            <person name="Balakrishnan R."/>
            <person name="Costanzo M.C."/>
            <person name="Dwight S.S."/>
            <person name="Hitz B.C."/>
            <person name="Karra K."/>
            <person name="Nash R.S."/>
            <person name="Weng S."/>
            <person name="Wong E.D."/>
            <person name="Lloyd P."/>
            <person name="Skrzypek M.S."/>
            <person name="Miyasato S.R."/>
            <person name="Simison M."/>
            <person name="Cherry J.M."/>
        </authorList>
    </citation>
    <scope>GENOME REANNOTATION</scope>
    <source>
        <strain>ATCC 204508 / S288c</strain>
    </source>
</reference>
<reference key="3">
    <citation type="journal article" date="2007" name="Genome Res.">
        <title>Approaching a complete repository of sequence-verified protein-encoding clones for Saccharomyces cerevisiae.</title>
        <authorList>
            <person name="Hu Y."/>
            <person name="Rolfs A."/>
            <person name="Bhullar B."/>
            <person name="Murthy T.V.S."/>
            <person name="Zhu C."/>
            <person name="Berger M.F."/>
            <person name="Camargo A.A."/>
            <person name="Kelley F."/>
            <person name="McCarron S."/>
            <person name="Jepson D."/>
            <person name="Richardson A."/>
            <person name="Raphael J."/>
            <person name="Moreira D."/>
            <person name="Taycher E."/>
            <person name="Zuo D."/>
            <person name="Mohr S."/>
            <person name="Kane M.F."/>
            <person name="Williamson J."/>
            <person name="Simpson A.J.G."/>
            <person name="Bulyk M.L."/>
            <person name="Harlow E."/>
            <person name="Marsischky G."/>
            <person name="Kolodner R.D."/>
            <person name="LaBaer J."/>
        </authorList>
    </citation>
    <scope>NUCLEOTIDE SEQUENCE [GENOMIC DNA]</scope>
    <source>
        <strain>ATCC 204508 / S288c</strain>
    </source>
</reference>
<reference key="4">
    <citation type="journal article" date="2003" name="Nature">
        <title>Sequencing and comparison of yeast species to identify genes and regulatory elements.</title>
        <authorList>
            <person name="Kellis M."/>
            <person name="Patterson N."/>
            <person name="Endrizzi M."/>
            <person name="Birren B.W."/>
            <person name="Lander E.S."/>
        </authorList>
    </citation>
    <scope>IDENTIFICATION OF PROBABLE INITIATION SITE</scope>
</reference>
<reference key="5">
    <citation type="journal article" date="2002" name="Mol. Biol. Cell">
        <title>Genomic screen for vacuolar protein sorting genes in Saccharomyces cerevisiae.</title>
        <authorList>
            <person name="Bonangelino C.J."/>
            <person name="Chavez E.M."/>
            <person name="Bonifacino J.S."/>
        </authorList>
    </citation>
    <scope>FUNCTION</scope>
</reference>
<reference key="6">
    <citation type="journal article" date="2003" name="Mol. Cell">
        <title>A Snf2 family ATPase complex required for recruitment of the histone H2A variant Htz1.</title>
        <authorList>
            <person name="Krogan N.J."/>
            <person name="Keogh M.-C."/>
            <person name="Datta N."/>
            <person name="Sawa C."/>
            <person name="Ryan O.W."/>
            <person name="Ding H."/>
            <person name="Haw R.A."/>
            <person name="Pootoolal J."/>
            <person name="Tong A."/>
            <person name="Canadien V."/>
            <person name="Richards D.P."/>
            <person name="Wu X."/>
            <person name="Emili A."/>
            <person name="Hughes T.R."/>
            <person name="Buratowski S."/>
            <person name="Greenblatt J.F."/>
        </authorList>
    </citation>
    <scope>FUNCTION</scope>
    <scope>INTERACTION WITH ACT1; ARP4; RVB1; RVB2; ARP6; YAF9; VPS71; SWC3; SWC4; SWC5; SWR1 AND HTZ1</scope>
</reference>
<reference key="7">
    <citation type="journal article" date="2003" name="Nature">
        <title>Global analysis of protein localization in budding yeast.</title>
        <authorList>
            <person name="Huh W.-K."/>
            <person name="Falvo J.V."/>
            <person name="Gerke L.C."/>
            <person name="Carroll A.S."/>
            <person name="Howson R.W."/>
            <person name="Weissman J.S."/>
            <person name="O'Shea E.K."/>
        </authorList>
    </citation>
    <scope>SUBCELLULAR LOCATION [LARGE SCALE ANALYSIS]</scope>
</reference>
<reference key="8">
    <citation type="journal article" date="2003" name="Nature">
        <title>Global analysis of protein expression in yeast.</title>
        <authorList>
            <person name="Ghaemmaghami S."/>
            <person name="Huh W.-K."/>
            <person name="Bower K."/>
            <person name="Howson R.W."/>
            <person name="Belle A."/>
            <person name="Dephoure N."/>
            <person name="O'Shea E.K."/>
            <person name="Weissman J.S."/>
        </authorList>
    </citation>
    <scope>LEVEL OF PROTEIN EXPRESSION [LARGE SCALE ANALYSIS]</scope>
</reference>
<reference key="9">
    <citation type="journal article" date="2004" name="Science">
        <title>ATP-driven exchange of histone H2AZ variant catalyzed by SWR1 chromatin remodeling complex.</title>
        <authorList>
            <person name="Mizuguchi G."/>
            <person name="Shen X."/>
            <person name="Landry J."/>
            <person name="Wu W.-H."/>
            <person name="Sen S."/>
            <person name="Wu C."/>
        </authorList>
    </citation>
    <scope>FUNCTION</scope>
    <scope>INTERACTION WITH ACT1; ARP4; RVB1; RVB2; ARP6; YAF9; VPS71; SWC3; SWC4; SWC5; SWR1 AND HTZ1</scope>
</reference>
<reference key="10">
    <citation type="journal article" date="2004" name="PLoS Biol.">
        <title>A protein complex containing the conserved Swi2/Snf2-related ATPase Swr1p deposits histone variant H2A.Z into euchromatin.</title>
        <authorList>
            <person name="Kobor M.S."/>
            <person name="Venkatasubrahmanyam S."/>
            <person name="Meneghini M.D."/>
            <person name="Gin J.W."/>
            <person name="Jennings J.L."/>
            <person name="Link A.J."/>
            <person name="Madhani H.D."/>
            <person name="Rine J."/>
        </authorList>
    </citation>
    <scope>FUNCTION</scope>
    <scope>INTERACTION WITH ACT1; ARP4; RVB1; RVB2; ARP6; YAF9; VPS71; SWC3; SWC4; SWC5; SWR1 AND HTZ1</scope>
</reference>
<reference key="11">
    <citation type="journal article" date="2005" name="Nat. Struct. Mol. Biol.">
        <title>Swc2 is a widely conserved H2AZ-binding module essential for ATP-dependent histone exchange.</title>
        <authorList>
            <person name="Wu W.-H."/>
            <person name="Alami S."/>
            <person name="Luk E."/>
            <person name="Wu C.-H."/>
            <person name="Sen S."/>
            <person name="Mizuguchi G."/>
            <person name="Wei D."/>
            <person name="Wu C."/>
        </authorList>
    </citation>
    <scope>INTERACTION WITH HTZ1</scope>
</reference>
<reference key="12">
    <citation type="journal article" date="2008" name="Mol. Cell. Proteomics">
        <title>A multidimensional chromatography technology for in-depth phosphoproteome analysis.</title>
        <authorList>
            <person name="Albuquerque C.P."/>
            <person name="Smolka M.B."/>
            <person name="Payne S.H."/>
            <person name="Bafna V."/>
            <person name="Eng J."/>
            <person name="Zhou H."/>
        </authorList>
    </citation>
    <scope>PHOSPHORYLATION [LARGE SCALE ANALYSIS] AT SER-425</scope>
    <scope>IDENTIFICATION BY MASS SPECTROMETRY [LARGE SCALE ANALYSIS]</scope>
</reference>
<reference key="13">
    <citation type="journal article" date="2009" name="Science">
        <title>Global analysis of Cdk1 substrate phosphorylation sites provides insights into evolution.</title>
        <authorList>
            <person name="Holt L.J."/>
            <person name="Tuch B.B."/>
            <person name="Villen J."/>
            <person name="Johnson A.D."/>
            <person name="Gygi S.P."/>
            <person name="Morgan D.O."/>
        </authorList>
    </citation>
    <scope>IDENTIFICATION BY MASS SPECTROMETRY [LARGE SCALE ANALYSIS]</scope>
</reference>
<protein>
    <recommendedName>
        <fullName>Vacuolar protein sorting-associated protein 72</fullName>
    </recommendedName>
    <alternativeName>
        <fullName>SWR complex protein 2</fullName>
    </alternativeName>
</protein>